<feature type="chain" id="PRO_0000247741" description="Actin-binding Rho-activating protein">
    <location>
        <begin position="1"/>
        <end position="375"/>
    </location>
</feature>
<feature type="region of interest" description="Disordered" evidence="3">
    <location>
        <begin position="37"/>
        <end position="101"/>
    </location>
</feature>
<feature type="region of interest" description="Disordered" evidence="3">
    <location>
        <begin position="175"/>
        <end position="197"/>
    </location>
</feature>
<feature type="region of interest" description="Actin-binding 1">
    <location>
        <begin position="193"/>
        <end position="293"/>
    </location>
</feature>
<feature type="region of interest" description="Interaction with actin" evidence="2">
    <location>
        <begin position="234"/>
        <end position="279"/>
    </location>
</feature>
<feature type="region of interest" description="Actin-binding 2">
    <location>
        <begin position="294"/>
        <end position="375"/>
    </location>
</feature>
<feature type="region of interest" description="Interaction with actin" evidence="2">
    <location>
        <begin position="346"/>
        <end position="375"/>
    </location>
</feature>
<feature type="compositionally biased region" description="Basic and acidic residues" evidence="3">
    <location>
        <begin position="80"/>
        <end position="101"/>
    </location>
</feature>
<feature type="modified residue" description="Phosphoserine" evidence="9">
    <location>
        <position position="150"/>
    </location>
</feature>
<feature type="modified residue" description="Phosphoserine" evidence="9">
    <location>
        <position position="182"/>
    </location>
</feature>
<feature type="sequence conflict" description="In Ref. 1; AAM94370." evidence="6" ref="1">
    <original>E</original>
    <variation>V</variation>
    <location>
        <position position="7"/>
    </location>
</feature>
<feature type="sequence conflict" description="In Ref. 1; AAM94370." evidence="6" ref="1">
    <original>E</original>
    <variation>K</variation>
    <location>
        <position position="163"/>
    </location>
</feature>
<feature type="helix" evidence="10">
    <location>
        <begin position="297"/>
        <end position="299"/>
    </location>
</feature>
<feature type="helix" evidence="10">
    <location>
        <begin position="305"/>
        <end position="314"/>
    </location>
</feature>
<feature type="helix" evidence="10">
    <location>
        <begin position="316"/>
        <end position="319"/>
    </location>
</feature>
<feature type="strand" evidence="10">
    <location>
        <begin position="324"/>
        <end position="326"/>
    </location>
</feature>
<feature type="helix" evidence="10">
    <location>
        <begin position="327"/>
        <end position="334"/>
    </location>
</feature>
<feature type="turn" evidence="10">
    <location>
        <begin position="335"/>
        <end position="338"/>
    </location>
</feature>
<feature type="helix" evidence="10">
    <location>
        <begin position="341"/>
        <end position="349"/>
    </location>
</feature>
<feature type="turn" evidence="10">
    <location>
        <begin position="363"/>
        <end position="365"/>
    </location>
</feature>
<feature type="strand" evidence="10">
    <location>
        <begin position="370"/>
        <end position="373"/>
    </location>
</feature>
<protein>
    <recommendedName>
        <fullName>Actin-binding Rho-activating protein</fullName>
    </recommendedName>
    <alternativeName>
        <fullName>MS1</fullName>
    </alternativeName>
    <alternativeName>
        <fullName>Striated muscle activator of Rho-dependent signaling</fullName>
        <shortName>STARS</shortName>
    </alternativeName>
</protein>
<evidence type="ECO:0000250" key="1"/>
<evidence type="ECO:0000250" key="2">
    <source>
        <dbReference type="UniProtKB" id="Q8BUZ1"/>
    </source>
</evidence>
<evidence type="ECO:0000256" key="3">
    <source>
        <dbReference type="SAM" id="MobiDB-lite"/>
    </source>
</evidence>
<evidence type="ECO:0000269" key="4">
    <source>
    </source>
</evidence>
<evidence type="ECO:0000269" key="5">
    <source>
    </source>
</evidence>
<evidence type="ECO:0000305" key="6"/>
<evidence type="ECO:0000312" key="7">
    <source>
        <dbReference type="EMBL" id="AAM94370.1"/>
    </source>
</evidence>
<evidence type="ECO:0000312" key="8">
    <source>
        <dbReference type="RGD" id="708493"/>
    </source>
</evidence>
<evidence type="ECO:0007744" key="9">
    <source>
    </source>
</evidence>
<evidence type="ECO:0007829" key="10">
    <source>
        <dbReference type="PDB" id="2KRH"/>
    </source>
</evidence>
<reference evidence="6 7" key="1">
    <citation type="journal article" date="2002" name="FEBS Lett.">
        <title>ms1, a novel stress-responsive, muscle-specific gene that is up-regulated in the early stages of pressure overload-induced left ventricular hypertrophy.</title>
        <authorList>
            <person name="Mahadeva H."/>
            <person name="Brooks G."/>
            <person name="Lodwick D."/>
            <person name="Chong N.W."/>
            <person name="Samani N.J."/>
        </authorList>
    </citation>
    <scope>NUCLEOTIDE SEQUENCE [MRNA]</scope>
    <scope>TISSUE SPECIFICITY</scope>
    <scope>DEVELOPMENTAL STAGE</scope>
    <scope>INDUCTION</scope>
    <source>
        <strain evidence="7">Wistar Kyoto</strain>
    </source>
</reference>
<reference key="2">
    <citation type="journal article" date="2004" name="Genome Res.">
        <title>The status, quality, and expansion of the NIH full-length cDNA project: the Mammalian Gene Collection (MGC).</title>
        <authorList>
            <consortium name="The MGC Project Team"/>
        </authorList>
    </citation>
    <scope>NUCLEOTIDE SEQUENCE [LARGE SCALE MRNA]</scope>
    <source>
        <tissue>Heart</tissue>
    </source>
</reference>
<reference evidence="6" key="3">
    <citation type="journal article" date="2002" name="J. Biol. Chem.">
        <title>STARS, a striated muscle activator of Rho signaling and serum response factor-dependent transcription.</title>
        <authorList>
            <person name="Arai A."/>
            <person name="Spencer J.A."/>
            <person name="Olson E.N."/>
        </authorList>
    </citation>
    <scope>SUBCELLULAR LOCATION</scope>
</reference>
<reference key="4">
    <citation type="journal article" date="2012" name="Nat. Commun.">
        <title>Quantitative maps of protein phosphorylation sites across 14 different rat organs and tissues.</title>
        <authorList>
            <person name="Lundby A."/>
            <person name="Secher A."/>
            <person name="Lage K."/>
            <person name="Nordsborg N.B."/>
            <person name="Dmytriyev A."/>
            <person name="Lundby C."/>
            <person name="Olsen J.V."/>
        </authorList>
    </citation>
    <scope>PHOSPHORYLATION [LARGE SCALE ANALYSIS] AT SER-150 AND SER-182</scope>
    <scope>IDENTIFICATION BY MASS SPECTROMETRY [LARGE SCALE ANALYSIS]</scope>
</reference>
<reference key="5">
    <citation type="journal article" date="2012" name="Proteins">
        <title>A structural and functional dissection of the cardiac stress response factor MS1.</title>
        <authorList>
            <person name="Fogl C."/>
            <person name="Puckey L."/>
            <person name="Hinssen U."/>
            <person name="Zaleska M."/>
            <person name="El-Mezgueldi M."/>
            <person name="Croasdale R."/>
            <person name="Bowman A."/>
            <person name="Matsukawa A."/>
            <person name="Samani N.J."/>
            <person name="Savva R."/>
            <person name="Pfuhl M."/>
        </authorList>
    </citation>
    <scope>STRUCTURE BY NMR OF 295-375</scope>
    <scope>SUBUNIT</scope>
    <scope>ACTIN-BINDING DOMAINS</scope>
</reference>
<dbReference type="EMBL" id="AF336113">
    <property type="protein sequence ID" value="AAM94370.1"/>
    <property type="molecule type" value="mRNA"/>
</dbReference>
<dbReference type="EMBL" id="BC158575">
    <property type="protein sequence ID" value="AAI58576.1"/>
    <property type="molecule type" value="mRNA"/>
</dbReference>
<dbReference type="RefSeq" id="NP_787038.1">
    <property type="nucleotide sequence ID" value="NM_175844.3"/>
</dbReference>
<dbReference type="PDB" id="2KRH">
    <property type="method" value="NMR"/>
    <property type="chains" value="A=295-375"/>
</dbReference>
<dbReference type="PDBsum" id="2KRH"/>
<dbReference type="SMR" id="Q8K4K7"/>
<dbReference type="FunCoup" id="Q8K4K7">
    <property type="interactions" value="48"/>
</dbReference>
<dbReference type="STRING" id="10116.ENSRNOP00000010539"/>
<dbReference type="iPTMnet" id="Q8K4K7"/>
<dbReference type="PhosphoSitePlus" id="Q8K4K7"/>
<dbReference type="PaxDb" id="10116-ENSRNOP00000010539"/>
<dbReference type="Ensembl" id="ENSRNOT00000010539.4">
    <property type="protein sequence ID" value="ENSRNOP00000010539.1"/>
    <property type="gene ID" value="ENSRNOG00000007999.4"/>
</dbReference>
<dbReference type="GeneID" id="286965"/>
<dbReference type="KEGG" id="rno:286965"/>
<dbReference type="UCSC" id="RGD:708493">
    <property type="organism name" value="rat"/>
</dbReference>
<dbReference type="AGR" id="RGD:708493"/>
<dbReference type="CTD" id="137735"/>
<dbReference type="RGD" id="708493">
    <property type="gene designation" value="Abra"/>
</dbReference>
<dbReference type="eggNOG" id="KOG3376">
    <property type="taxonomic scope" value="Eukaryota"/>
</dbReference>
<dbReference type="GeneTree" id="ENSGT00390000015984"/>
<dbReference type="HOGENOM" id="CLU_062244_0_0_1"/>
<dbReference type="InParanoid" id="Q8K4K7"/>
<dbReference type="OMA" id="DEPKWRS"/>
<dbReference type="OrthoDB" id="66299at9989"/>
<dbReference type="PhylomeDB" id="Q8K4K7"/>
<dbReference type="TreeFam" id="TF328879"/>
<dbReference type="EvolutionaryTrace" id="Q8K4K7"/>
<dbReference type="PRO" id="PR:Q8K4K7"/>
<dbReference type="Proteomes" id="UP000002494">
    <property type="component" value="Chromosome 7"/>
</dbReference>
<dbReference type="Bgee" id="ENSRNOG00000007999">
    <property type="expression patterns" value="Expressed in skeletal muscle tissue and 9 other cell types or tissues"/>
</dbReference>
<dbReference type="GO" id="GO:0015629">
    <property type="term" value="C:actin cytoskeleton"/>
    <property type="evidence" value="ECO:0000250"/>
    <property type="project" value="HGNC"/>
</dbReference>
<dbReference type="GO" id="GO:0030016">
    <property type="term" value="C:myofibril"/>
    <property type="evidence" value="ECO:0000266"/>
    <property type="project" value="RGD"/>
</dbReference>
<dbReference type="GO" id="GO:0005886">
    <property type="term" value="C:plasma membrane"/>
    <property type="evidence" value="ECO:0007669"/>
    <property type="project" value="Ensembl"/>
</dbReference>
<dbReference type="GO" id="GO:0030017">
    <property type="term" value="C:sarcomere"/>
    <property type="evidence" value="ECO:0000314"/>
    <property type="project" value="HGNC-UCL"/>
</dbReference>
<dbReference type="GO" id="GO:0003779">
    <property type="term" value="F:actin binding"/>
    <property type="evidence" value="ECO:0000250"/>
    <property type="project" value="HGNC"/>
</dbReference>
<dbReference type="GO" id="GO:0030036">
    <property type="term" value="P:actin cytoskeleton organization"/>
    <property type="evidence" value="ECO:0000250"/>
    <property type="project" value="HGNC"/>
</dbReference>
<dbReference type="GO" id="GO:0045893">
    <property type="term" value="P:positive regulation of DNA-templated transcription"/>
    <property type="evidence" value="ECO:0000266"/>
    <property type="project" value="RGD"/>
</dbReference>
<dbReference type="GO" id="GO:0035025">
    <property type="term" value="P:positive regulation of Rho protein signal transduction"/>
    <property type="evidence" value="ECO:0000250"/>
    <property type="project" value="HGNC"/>
</dbReference>
<dbReference type="GO" id="GO:0045944">
    <property type="term" value="P:positive regulation of transcription by RNA polymerase II"/>
    <property type="evidence" value="ECO:0000266"/>
    <property type="project" value="RGD"/>
</dbReference>
<dbReference type="GO" id="GO:0006606">
    <property type="term" value="P:protein import into nucleus"/>
    <property type="evidence" value="ECO:0000266"/>
    <property type="project" value="RGD"/>
</dbReference>
<dbReference type="GO" id="GO:0006366">
    <property type="term" value="P:transcription by RNA polymerase II"/>
    <property type="evidence" value="ECO:0000266"/>
    <property type="project" value="RGD"/>
</dbReference>
<dbReference type="FunFam" id="1.10.10.1540:FF:000001">
    <property type="entry name" value="Actin-binding Rho-activating protein a"/>
    <property type="match status" value="1"/>
</dbReference>
<dbReference type="Gene3D" id="1.10.10.1540">
    <property type="entry name" value="Costar domain"/>
    <property type="match status" value="1"/>
</dbReference>
<dbReference type="InterPro" id="IPR026111">
    <property type="entry name" value="Abra"/>
</dbReference>
<dbReference type="InterPro" id="IPR027817">
    <property type="entry name" value="Costars_dom"/>
</dbReference>
<dbReference type="InterPro" id="IPR038095">
    <property type="entry name" value="Costars_sf"/>
</dbReference>
<dbReference type="PANTHER" id="PTHR22739:SF20">
    <property type="entry name" value="ACTIN-BINDING RHO-ACTIVATING PROTEIN"/>
    <property type="match status" value="1"/>
</dbReference>
<dbReference type="PANTHER" id="PTHR22739">
    <property type="entry name" value="STRIATED MUSCLE ACTIVATOR OF RHO-DEPENDENT SIGNALING-RELATED"/>
    <property type="match status" value="1"/>
</dbReference>
<dbReference type="Pfam" id="PF14705">
    <property type="entry name" value="Costars"/>
    <property type="match status" value="1"/>
</dbReference>
<dbReference type="SMART" id="SM01283">
    <property type="entry name" value="Costars"/>
    <property type="match status" value="1"/>
</dbReference>
<sequence>MAPGETEREAGPAKSALQKVRRATLVINLARGWQQWANENSTRQAQEPAGWLPGATQDLPHTPKEPGPRQHAPKPPSPKPDGDREGRGSEEATEVSHIKRKEVTRTVVSKAYERGGDVNYLSHRYEHDGGVSEAVQPDNDIDRILLSHDSPTRRRKCTNLVSELTKGWKVMEQEEPKWKSDSIDTEDSGYGGDMEERPEQDVAQVAAARIKRPLHSQANRYSETLNCKAHRKYSQVDNLKGRWQQWADEHIQSQKLNPFSDEFDYDLAMSTRLHKGDEGYGRPKEGSKTAERAKRAEEHIYREIMELCFVIRTMARHRRDGKIQVTFGELFDRYVRISDKVVGILMRARKHGLVHFEGEMLWQGKDDHVVITLLE</sequence>
<comment type="function">
    <text evidence="2">Acts as an activator of serum response factor (SRF)-dependent transcription possibly by inducing nuclear translocation of MKL1 or MKL2 and through a mechanism requiring Rho-actin signaling.</text>
</comment>
<comment type="subunit">
    <text evidence="1">Binds F-actin and ABLIM1, ABLIM2 and ABLIM3. Interaction with ABLIM2 and ABLIM3 enhances activity (By similarity).</text>
</comment>
<comment type="subcellular location">
    <subcellularLocation>
        <location evidence="4">Cytoplasm</location>
        <location evidence="4">Myofibril</location>
        <location evidence="4">Sarcomere</location>
    </subcellularLocation>
    <subcellularLocation>
        <location evidence="4">Cytoplasm</location>
        <location evidence="4">Cytoskeleton</location>
    </subcellularLocation>
    <text>Localized to the I-band of the sarcomere and to a lesser extent to the sarcomeric structure between Z-lines.</text>
</comment>
<comment type="tissue specificity">
    <text evidence="5">Predominantly expressed in heart and skeletal muscle, and expressed at lower levels in adrenal gland, brain, kidney, liver, and testis.</text>
</comment>
<comment type="developmental stage">
    <text evidence="5">Expressed in the left ventricle of embryonic heart and is postnatally up-regulated through to adulthood.</text>
</comment>
<comment type="induction">
    <text evidence="5">Up-regulated within 1 hour in the left ventricle following the application of pressure overload by aortic banding.</text>
</comment>
<comment type="domain">
    <text>The actin-binding domain 1 (ABD1) is intrinsically disordered, and binds to F-actin with higher affinity than ABD2.</text>
</comment>
<organism>
    <name type="scientific">Rattus norvegicus</name>
    <name type="common">Rat</name>
    <dbReference type="NCBI Taxonomy" id="10116"/>
    <lineage>
        <taxon>Eukaryota</taxon>
        <taxon>Metazoa</taxon>
        <taxon>Chordata</taxon>
        <taxon>Craniata</taxon>
        <taxon>Vertebrata</taxon>
        <taxon>Euteleostomi</taxon>
        <taxon>Mammalia</taxon>
        <taxon>Eutheria</taxon>
        <taxon>Euarchontoglires</taxon>
        <taxon>Glires</taxon>
        <taxon>Rodentia</taxon>
        <taxon>Myomorpha</taxon>
        <taxon>Muroidea</taxon>
        <taxon>Muridae</taxon>
        <taxon>Murinae</taxon>
        <taxon>Rattus</taxon>
    </lineage>
</organism>
<keyword id="KW-0002">3D-structure</keyword>
<keyword id="KW-0009">Actin-binding</keyword>
<keyword id="KW-0010">Activator</keyword>
<keyword id="KW-0963">Cytoplasm</keyword>
<keyword id="KW-0206">Cytoskeleton</keyword>
<keyword id="KW-0597">Phosphoprotein</keyword>
<keyword id="KW-0653">Protein transport</keyword>
<keyword id="KW-1185">Reference proteome</keyword>
<keyword id="KW-0804">Transcription</keyword>
<keyword id="KW-0805">Transcription regulation</keyword>
<keyword id="KW-0811">Translocation</keyword>
<keyword id="KW-0813">Transport</keyword>
<name>ABRA_RAT</name>
<proteinExistence type="evidence at protein level"/>
<accession>Q8K4K7</accession>
<accession>B0BMV2</accession>
<gene>
    <name evidence="8" type="primary">Abra</name>
    <name evidence="8" type="synonym">Ms1</name>
</gene>